<sequence length="121" mass="13743">NLVQFKTLIMKIAGRSVVYKYFYGCYCGWGGIGQPRDATDRCCFVHDCCYGKVTNCNPKTATYSYTEENGALVCGGDDPCKKQVCECDRVAAMCFRDNKDTYDNKYWFLPPKNCQEDSEPC</sequence>
<comment type="function">
    <text evidence="6">Snake venom phospholipase A2 (PLA2) which exhibits indirect hemolysis, induces mild edema inflammation in the foot pads of mice and slightly delays anticoagulant activities. In mice, not lethal, even at the highest dose, and exhibits low to moderate myotoxicity on muscular fibers. PLA2 catalyzes the calcium-dependent hydrolysis of the 2-acyl groups in 3-sn-phosphoglycerides.</text>
</comment>
<comment type="catalytic activity">
    <reaction evidence="4 5 6">
        <text>a 1,2-diacyl-sn-glycero-3-phosphocholine + H2O = a 1-acyl-sn-glycero-3-phosphocholine + a fatty acid + H(+)</text>
        <dbReference type="Rhea" id="RHEA:15801"/>
        <dbReference type="ChEBI" id="CHEBI:15377"/>
        <dbReference type="ChEBI" id="CHEBI:15378"/>
        <dbReference type="ChEBI" id="CHEBI:28868"/>
        <dbReference type="ChEBI" id="CHEBI:57643"/>
        <dbReference type="ChEBI" id="CHEBI:58168"/>
        <dbReference type="EC" id="3.1.1.4"/>
    </reaction>
</comment>
<comment type="cofactor">
    <cofactor evidence="3">
        <name>Ca(2+)</name>
        <dbReference type="ChEBI" id="CHEBI:29108"/>
    </cofactor>
    <text evidence="3">Binds 1 Ca(2+) ion.</text>
</comment>
<comment type="subcellular location">
    <subcellularLocation>
        <location evidence="6">Secreted</location>
    </subcellularLocation>
</comment>
<comment type="tissue specificity">
    <text evidence="6">Expressed by the venom gland.</text>
</comment>
<comment type="mass spectrometry" mass="14185.5" method="Electrospray" evidence="6"/>
<comment type="similarity">
    <text evidence="8">Belongs to the phospholipase A2 family. Group II subfamily. D49 sub-subfamily.</text>
</comment>
<keyword id="KW-0106">Calcium</keyword>
<keyword id="KW-0903">Direct protein sequencing</keyword>
<keyword id="KW-1015">Disulfide bond</keyword>
<keyword id="KW-0378">Hydrolase</keyword>
<keyword id="KW-0442">Lipid degradation</keyword>
<keyword id="KW-0443">Lipid metabolism</keyword>
<keyword id="KW-0479">Metal-binding</keyword>
<keyword id="KW-0964">Secreted</keyword>
<keyword id="KW-0800">Toxin</keyword>
<name>PA2A4_BOTAL</name>
<feature type="chain" id="PRO_0000392923" description="Acidic phospholipase A2 SpII RP4">
    <location>
        <begin position="1"/>
        <end position="121"/>
    </location>
</feature>
<feature type="active site" evidence="2">
    <location>
        <position position="46"/>
    </location>
</feature>
<feature type="active site" evidence="2">
    <location>
        <position position="88"/>
    </location>
</feature>
<feature type="binding site" evidence="1">
    <location>
        <position position="26"/>
    </location>
    <ligand>
        <name>Ca(2+)</name>
        <dbReference type="ChEBI" id="CHEBI:29108"/>
    </ligand>
</feature>
<feature type="binding site" evidence="1">
    <location>
        <position position="28"/>
    </location>
    <ligand>
        <name>Ca(2+)</name>
        <dbReference type="ChEBI" id="CHEBI:29108"/>
    </ligand>
</feature>
<feature type="binding site" evidence="1">
    <location>
        <position position="30"/>
    </location>
    <ligand>
        <name>Ca(2+)</name>
        <dbReference type="ChEBI" id="CHEBI:29108"/>
    </ligand>
</feature>
<feature type="binding site" evidence="1">
    <location>
        <position position="47"/>
    </location>
    <ligand>
        <name>Ca(2+)</name>
        <dbReference type="ChEBI" id="CHEBI:29108"/>
    </ligand>
</feature>
<feature type="disulfide bond" evidence="3">
    <location>
        <begin position="25"/>
        <end position="114"/>
    </location>
</feature>
<feature type="disulfide bond" evidence="3">
    <location>
        <begin position="27"/>
        <end position="43"/>
    </location>
</feature>
<feature type="disulfide bond" evidence="3">
    <location>
        <begin position="42"/>
        <end position="94"/>
    </location>
</feature>
<feature type="disulfide bond" evidence="3">
    <location>
        <begin position="48"/>
        <end position="121"/>
    </location>
</feature>
<feature type="disulfide bond" evidence="3">
    <location>
        <begin position="49"/>
        <end position="87"/>
    </location>
</feature>
<feature type="disulfide bond" evidence="3">
    <location>
        <begin position="56"/>
        <end position="80"/>
    </location>
</feature>
<feature type="disulfide bond" evidence="3">
    <location>
        <begin position="74"/>
        <end position="85"/>
    </location>
</feature>
<reference key="1">
    <citation type="journal article" date="2010" name="Toxicon">
        <title>Isolation and functional characterization of a new acidic PLA(2) Ba SpII RP4 of the Bothrops alternatus snake venom from Argentina.</title>
        <authorList>
            <person name="Garcia Denegri M.E."/>
            <person name="Acosta O.C."/>
            <person name="Huancahuire-Vega S."/>
            <person name="Martins-de-Souza D."/>
            <person name="Marangoni S."/>
            <person name="Marunak S.L."/>
            <person name="Teibler G.P."/>
            <person name="Leiva L.C."/>
            <person name="Ponce-Soto L.A."/>
        </authorList>
    </citation>
    <scope>PROTEIN SEQUENCE</scope>
    <scope>FUNCTION</scope>
    <scope>CATALYTIC ACTIVITY</scope>
    <scope>SUBCELLULAR LOCATION</scope>
    <scope>TISSUE SPECIFICITY</scope>
    <scope>MASS SPECTROMETRY</scope>
    <source>
        <strain evidence="7">Northeast Argentina</strain>
        <tissue evidence="6">Venom</tissue>
    </source>
</reference>
<accession>P86456</accession>
<organism>
    <name type="scientific">Bothrops alternatus</name>
    <name type="common">Urutu</name>
    <name type="synonym">Rhinocerophis alternatus</name>
    <dbReference type="NCBI Taxonomy" id="64174"/>
    <lineage>
        <taxon>Eukaryota</taxon>
        <taxon>Metazoa</taxon>
        <taxon>Chordata</taxon>
        <taxon>Craniata</taxon>
        <taxon>Vertebrata</taxon>
        <taxon>Euteleostomi</taxon>
        <taxon>Lepidosauria</taxon>
        <taxon>Squamata</taxon>
        <taxon>Bifurcata</taxon>
        <taxon>Unidentata</taxon>
        <taxon>Episquamata</taxon>
        <taxon>Toxicofera</taxon>
        <taxon>Serpentes</taxon>
        <taxon>Colubroidea</taxon>
        <taxon>Viperidae</taxon>
        <taxon>Crotalinae</taxon>
        <taxon>Bothrops</taxon>
    </lineage>
</organism>
<proteinExistence type="evidence at protein level"/>
<evidence type="ECO:0000250" key="1">
    <source>
        <dbReference type="UniProtKB" id="O42191"/>
    </source>
</evidence>
<evidence type="ECO:0000250" key="2">
    <source>
        <dbReference type="UniProtKB" id="P06859"/>
    </source>
</evidence>
<evidence type="ECO:0000250" key="3">
    <source>
        <dbReference type="UniProtKB" id="P14418"/>
    </source>
</evidence>
<evidence type="ECO:0000255" key="4">
    <source>
        <dbReference type="PROSITE-ProRule" id="PRU10035"/>
    </source>
</evidence>
<evidence type="ECO:0000255" key="5">
    <source>
        <dbReference type="PROSITE-ProRule" id="PRU10036"/>
    </source>
</evidence>
<evidence type="ECO:0000269" key="6">
    <source>
    </source>
</evidence>
<evidence type="ECO:0000303" key="7">
    <source>
    </source>
</evidence>
<evidence type="ECO:0000305" key="8"/>
<dbReference type="EC" id="3.1.1.4" evidence="6"/>
<dbReference type="SMR" id="P86456"/>
<dbReference type="GO" id="GO:0005576">
    <property type="term" value="C:extracellular region"/>
    <property type="evidence" value="ECO:0007669"/>
    <property type="project" value="UniProtKB-SubCell"/>
</dbReference>
<dbReference type="GO" id="GO:0005509">
    <property type="term" value="F:calcium ion binding"/>
    <property type="evidence" value="ECO:0007669"/>
    <property type="project" value="InterPro"/>
</dbReference>
<dbReference type="GO" id="GO:0047498">
    <property type="term" value="F:calcium-dependent phospholipase A2 activity"/>
    <property type="evidence" value="ECO:0007669"/>
    <property type="project" value="TreeGrafter"/>
</dbReference>
<dbReference type="GO" id="GO:0005543">
    <property type="term" value="F:phospholipid binding"/>
    <property type="evidence" value="ECO:0007669"/>
    <property type="project" value="TreeGrafter"/>
</dbReference>
<dbReference type="GO" id="GO:0090729">
    <property type="term" value="F:toxin activity"/>
    <property type="evidence" value="ECO:0007669"/>
    <property type="project" value="UniProtKB-KW"/>
</dbReference>
<dbReference type="GO" id="GO:0050482">
    <property type="term" value="P:arachidonate secretion"/>
    <property type="evidence" value="ECO:0007669"/>
    <property type="project" value="InterPro"/>
</dbReference>
<dbReference type="GO" id="GO:0016042">
    <property type="term" value="P:lipid catabolic process"/>
    <property type="evidence" value="ECO:0007669"/>
    <property type="project" value="UniProtKB-KW"/>
</dbReference>
<dbReference type="GO" id="GO:0042130">
    <property type="term" value="P:negative regulation of T cell proliferation"/>
    <property type="evidence" value="ECO:0007669"/>
    <property type="project" value="TreeGrafter"/>
</dbReference>
<dbReference type="GO" id="GO:0006644">
    <property type="term" value="P:phospholipid metabolic process"/>
    <property type="evidence" value="ECO:0007669"/>
    <property type="project" value="InterPro"/>
</dbReference>
<dbReference type="CDD" id="cd00125">
    <property type="entry name" value="PLA2c"/>
    <property type="match status" value="1"/>
</dbReference>
<dbReference type="FunFam" id="1.20.90.10:FF:000001">
    <property type="entry name" value="Basic phospholipase A2 homolog"/>
    <property type="match status" value="1"/>
</dbReference>
<dbReference type="Gene3D" id="1.20.90.10">
    <property type="entry name" value="Phospholipase A2 domain"/>
    <property type="match status" value="1"/>
</dbReference>
<dbReference type="InterPro" id="IPR001211">
    <property type="entry name" value="PLipase_A2"/>
</dbReference>
<dbReference type="InterPro" id="IPR033112">
    <property type="entry name" value="PLipase_A2_Asp_AS"/>
</dbReference>
<dbReference type="InterPro" id="IPR016090">
    <property type="entry name" value="PLipase_A2_dom"/>
</dbReference>
<dbReference type="InterPro" id="IPR036444">
    <property type="entry name" value="PLipase_A2_dom_sf"/>
</dbReference>
<dbReference type="InterPro" id="IPR033113">
    <property type="entry name" value="PLipase_A2_His_AS"/>
</dbReference>
<dbReference type="PANTHER" id="PTHR11716">
    <property type="entry name" value="PHOSPHOLIPASE A2 FAMILY MEMBER"/>
    <property type="match status" value="1"/>
</dbReference>
<dbReference type="PANTHER" id="PTHR11716:SF9">
    <property type="entry name" value="PHOSPHOLIPASE A2, MEMBRANE ASSOCIATED"/>
    <property type="match status" value="1"/>
</dbReference>
<dbReference type="Pfam" id="PF00068">
    <property type="entry name" value="Phospholip_A2_1"/>
    <property type="match status" value="1"/>
</dbReference>
<dbReference type="PRINTS" id="PR00389">
    <property type="entry name" value="PHPHLIPASEA2"/>
</dbReference>
<dbReference type="SMART" id="SM00085">
    <property type="entry name" value="PA2c"/>
    <property type="match status" value="1"/>
</dbReference>
<dbReference type="SUPFAM" id="SSF48619">
    <property type="entry name" value="Phospholipase A2, PLA2"/>
    <property type="match status" value="1"/>
</dbReference>
<dbReference type="PROSITE" id="PS00119">
    <property type="entry name" value="PA2_ASP"/>
    <property type="match status" value="1"/>
</dbReference>
<dbReference type="PROSITE" id="PS00118">
    <property type="entry name" value="PA2_HIS"/>
    <property type="match status" value="1"/>
</dbReference>
<protein>
    <recommendedName>
        <fullName evidence="7">Acidic phospholipase A2 SpII RP4</fullName>
        <shortName evidence="7">Ba SpII RP4</shortName>
        <shortName>svPLA2</shortName>
        <ecNumber evidence="6">3.1.1.4</ecNumber>
    </recommendedName>
    <alternativeName>
        <fullName evidence="3">Phosphatidylcholine 2-acylhydrolase</fullName>
    </alternativeName>
</protein>